<keyword id="KW-0997">Cell inner membrane</keyword>
<keyword id="KW-1003">Cell membrane</keyword>
<keyword id="KW-0472">Membrane</keyword>
<keyword id="KW-1185">Reference proteome</keyword>
<proteinExistence type="inferred from homology"/>
<sequence>MIIAFIRLYQYCLSPFLGPSCRFSPSCSHYACEALARHGATRGLVLSVWRIMRCNPWSRGGYDPVPAEPFR</sequence>
<gene>
    <name type="ordered locus">Nmul_A2777</name>
</gene>
<feature type="chain" id="PRO_0000253133" description="Putative membrane protein insertion efficiency factor">
    <location>
        <begin position="1"/>
        <end position="71"/>
    </location>
</feature>
<organism>
    <name type="scientific">Nitrosospira multiformis (strain ATCC 25196 / NCIMB 11849 / C 71)</name>
    <dbReference type="NCBI Taxonomy" id="323848"/>
    <lineage>
        <taxon>Bacteria</taxon>
        <taxon>Pseudomonadati</taxon>
        <taxon>Pseudomonadota</taxon>
        <taxon>Betaproteobacteria</taxon>
        <taxon>Nitrosomonadales</taxon>
        <taxon>Nitrosomonadaceae</taxon>
        <taxon>Nitrosospira</taxon>
    </lineage>
</organism>
<comment type="function">
    <text evidence="1">Could be involved in insertion of integral membrane proteins into the membrane.</text>
</comment>
<comment type="subcellular location">
    <subcellularLocation>
        <location evidence="1">Cell inner membrane</location>
        <topology evidence="1">Peripheral membrane protein</topology>
        <orientation evidence="1">Cytoplasmic side</orientation>
    </subcellularLocation>
</comment>
<comment type="similarity">
    <text evidence="1">Belongs to the UPF0161 family.</text>
</comment>
<accession>Q2Y5A7</accession>
<dbReference type="EMBL" id="CP000103">
    <property type="protein sequence ID" value="ABB76064.1"/>
    <property type="molecule type" value="Genomic_DNA"/>
</dbReference>
<dbReference type="STRING" id="323848.Nmul_A2777"/>
<dbReference type="KEGG" id="nmu:Nmul_A2777"/>
<dbReference type="eggNOG" id="COG0759">
    <property type="taxonomic scope" value="Bacteria"/>
</dbReference>
<dbReference type="HOGENOM" id="CLU_144811_6_1_4"/>
<dbReference type="Proteomes" id="UP000002718">
    <property type="component" value="Chromosome"/>
</dbReference>
<dbReference type="GO" id="GO:0005886">
    <property type="term" value="C:plasma membrane"/>
    <property type="evidence" value="ECO:0007669"/>
    <property type="project" value="UniProtKB-SubCell"/>
</dbReference>
<dbReference type="HAMAP" id="MF_00386">
    <property type="entry name" value="UPF0161_YidD"/>
    <property type="match status" value="1"/>
</dbReference>
<dbReference type="InterPro" id="IPR002696">
    <property type="entry name" value="Membr_insert_effic_factor_YidD"/>
</dbReference>
<dbReference type="NCBIfam" id="TIGR00278">
    <property type="entry name" value="membrane protein insertion efficiency factor YidD"/>
    <property type="match status" value="1"/>
</dbReference>
<dbReference type="PANTHER" id="PTHR33383">
    <property type="entry name" value="MEMBRANE PROTEIN INSERTION EFFICIENCY FACTOR-RELATED"/>
    <property type="match status" value="1"/>
</dbReference>
<dbReference type="PANTHER" id="PTHR33383:SF1">
    <property type="entry name" value="MEMBRANE PROTEIN INSERTION EFFICIENCY FACTOR-RELATED"/>
    <property type="match status" value="1"/>
</dbReference>
<dbReference type="Pfam" id="PF01809">
    <property type="entry name" value="YidD"/>
    <property type="match status" value="1"/>
</dbReference>
<dbReference type="SMART" id="SM01234">
    <property type="entry name" value="Haemolytic"/>
    <property type="match status" value="1"/>
</dbReference>
<protein>
    <recommendedName>
        <fullName evidence="1">Putative membrane protein insertion efficiency factor</fullName>
    </recommendedName>
</protein>
<name>YIDD_NITMU</name>
<evidence type="ECO:0000255" key="1">
    <source>
        <dbReference type="HAMAP-Rule" id="MF_00386"/>
    </source>
</evidence>
<reference key="1">
    <citation type="submission" date="2005-08" db="EMBL/GenBank/DDBJ databases">
        <title>Complete sequence of chromosome 1 of Nitrosospira multiformis ATCC 25196.</title>
        <authorList>
            <person name="Copeland A."/>
            <person name="Lucas S."/>
            <person name="Lapidus A."/>
            <person name="Barry K."/>
            <person name="Detter J.C."/>
            <person name="Glavina T."/>
            <person name="Hammon N."/>
            <person name="Israni S."/>
            <person name="Pitluck S."/>
            <person name="Chain P."/>
            <person name="Malfatti S."/>
            <person name="Shin M."/>
            <person name="Vergez L."/>
            <person name="Schmutz J."/>
            <person name="Larimer F."/>
            <person name="Land M."/>
            <person name="Hauser L."/>
            <person name="Kyrpides N."/>
            <person name="Lykidis A."/>
            <person name="Richardson P."/>
        </authorList>
    </citation>
    <scope>NUCLEOTIDE SEQUENCE [LARGE SCALE GENOMIC DNA]</scope>
    <source>
        <strain>ATCC 25196 / NCIMB 11849 / C 71</strain>
    </source>
</reference>